<comment type="function">
    <text evidence="1">DEAD-box RNA helicase involved in RNA degradation. Has RNA-dependent ATPase activity and unwinds double-stranded RNA.</text>
</comment>
<comment type="catalytic activity">
    <reaction evidence="1">
        <text>ATP + H2O = ADP + phosphate + H(+)</text>
        <dbReference type="Rhea" id="RHEA:13065"/>
        <dbReference type="ChEBI" id="CHEBI:15377"/>
        <dbReference type="ChEBI" id="CHEBI:15378"/>
        <dbReference type="ChEBI" id="CHEBI:30616"/>
        <dbReference type="ChEBI" id="CHEBI:43474"/>
        <dbReference type="ChEBI" id="CHEBI:456216"/>
        <dbReference type="EC" id="3.6.4.13"/>
    </reaction>
</comment>
<comment type="subunit">
    <text evidence="1">Component of the RNA degradosome, which is a multiprotein complex involved in RNA processing and mRNA degradation.</text>
</comment>
<comment type="subcellular location">
    <subcellularLocation>
        <location evidence="1">Cytoplasm</location>
    </subcellularLocation>
</comment>
<comment type="similarity">
    <text evidence="1">Belongs to the DEAD box helicase family. RhlB subfamily.</text>
</comment>
<sequence>MKKTHITEQKFADLGLNPQVVEGLEKKGFEFCTPIQALALPVLLSGQDIAGQAQTGTGKTLAFLTATFNHLLTTHAHEGRQPTQPRAIIMAPTRELAIQIYNDAEPLIASTGIKAALAYGGESYDKQLAKLQGGVDVLIGTTGRIIDFYKQRVFNLNNIQAVVLDEADRMFDLGFIKDIRFLFRRMPAPQERLNMLFSATLSYRVQELAFEHMHNPEHVVVEPEQKTGHRIQEELFYPSNEDKMALLQTLIEEEWPDRAIIFANTKYKCESIWAHLAADGHRVGLLTGDVPQKKREKILEQFTQGSVDLLVATDVAARGLHIPQVTHVFNYDLPDDCEDYVHRIGRTGRAGASGHSISFACEDYAINLPAIEEYIEHTIPVSDYDSSALIQDLPAPVRTPSARNQQRRTNTGGARSGDRKSNNRRPRQPRQHKEA</sequence>
<name>RHLB_VIBVY</name>
<gene>
    <name evidence="1" type="primary">rhlB</name>
    <name type="ordered locus">VV3183</name>
</gene>
<reference key="1">
    <citation type="journal article" date="2003" name="Genome Res.">
        <title>Comparative genome analysis of Vibrio vulnificus, a marine pathogen.</title>
        <authorList>
            <person name="Chen C.-Y."/>
            <person name="Wu K.-M."/>
            <person name="Chang Y.-C."/>
            <person name="Chang C.-H."/>
            <person name="Tsai H.-C."/>
            <person name="Liao T.-L."/>
            <person name="Liu Y.-M."/>
            <person name="Chen H.-J."/>
            <person name="Shen A.B.-T."/>
            <person name="Li J.-C."/>
            <person name="Su T.-L."/>
            <person name="Shao C.-P."/>
            <person name="Lee C.-T."/>
            <person name="Hor L.-I."/>
            <person name="Tsai S.-F."/>
        </authorList>
    </citation>
    <scope>NUCLEOTIDE SEQUENCE [LARGE SCALE GENOMIC DNA]</scope>
    <source>
        <strain>YJ016</strain>
    </source>
</reference>
<proteinExistence type="inferred from homology"/>
<protein>
    <recommendedName>
        <fullName evidence="1">ATP-dependent RNA helicase RhlB</fullName>
        <ecNumber evidence="1">3.6.4.13</ecNumber>
    </recommendedName>
</protein>
<dbReference type="EC" id="3.6.4.13" evidence="1"/>
<dbReference type="EMBL" id="BA000037">
    <property type="protein sequence ID" value="BAC95947.1"/>
    <property type="molecule type" value="Genomic_DNA"/>
</dbReference>
<dbReference type="RefSeq" id="WP_011151397.1">
    <property type="nucleotide sequence ID" value="NC_005139.1"/>
</dbReference>
<dbReference type="SMR" id="Q7MGP7"/>
<dbReference type="STRING" id="672.VV93_v1c29040"/>
<dbReference type="KEGG" id="vvy:VV3183"/>
<dbReference type="PATRIC" id="fig|196600.6.peg.3151"/>
<dbReference type="eggNOG" id="COG0513">
    <property type="taxonomic scope" value="Bacteria"/>
</dbReference>
<dbReference type="HOGENOM" id="CLU_003041_1_3_6"/>
<dbReference type="Proteomes" id="UP000002675">
    <property type="component" value="Chromosome I"/>
</dbReference>
<dbReference type="GO" id="GO:0005829">
    <property type="term" value="C:cytosol"/>
    <property type="evidence" value="ECO:0007669"/>
    <property type="project" value="TreeGrafter"/>
</dbReference>
<dbReference type="GO" id="GO:0005524">
    <property type="term" value="F:ATP binding"/>
    <property type="evidence" value="ECO:0007669"/>
    <property type="project" value="UniProtKB-UniRule"/>
</dbReference>
<dbReference type="GO" id="GO:0016887">
    <property type="term" value="F:ATP hydrolysis activity"/>
    <property type="evidence" value="ECO:0007669"/>
    <property type="project" value="RHEA"/>
</dbReference>
<dbReference type="GO" id="GO:0003723">
    <property type="term" value="F:RNA binding"/>
    <property type="evidence" value="ECO:0007669"/>
    <property type="project" value="UniProtKB-UniRule"/>
</dbReference>
<dbReference type="GO" id="GO:0003724">
    <property type="term" value="F:RNA helicase activity"/>
    <property type="evidence" value="ECO:0007669"/>
    <property type="project" value="UniProtKB-UniRule"/>
</dbReference>
<dbReference type="GO" id="GO:0006401">
    <property type="term" value="P:RNA catabolic process"/>
    <property type="evidence" value="ECO:0007669"/>
    <property type="project" value="UniProtKB-UniRule"/>
</dbReference>
<dbReference type="CDD" id="cd00268">
    <property type="entry name" value="DEADc"/>
    <property type="match status" value="1"/>
</dbReference>
<dbReference type="CDD" id="cd18787">
    <property type="entry name" value="SF2_C_DEAD"/>
    <property type="match status" value="1"/>
</dbReference>
<dbReference type="FunFam" id="3.40.50.300:FF:000008">
    <property type="entry name" value="ATP-dependent RNA helicase RhlB"/>
    <property type="match status" value="1"/>
</dbReference>
<dbReference type="FunFam" id="3.40.50.300:FF:000312">
    <property type="entry name" value="ATP-dependent RNA helicase RhlB"/>
    <property type="match status" value="1"/>
</dbReference>
<dbReference type="Gene3D" id="3.40.50.300">
    <property type="entry name" value="P-loop containing nucleotide triphosphate hydrolases"/>
    <property type="match status" value="2"/>
</dbReference>
<dbReference type="HAMAP" id="MF_00661">
    <property type="entry name" value="DEAD_helicase_RhlB"/>
    <property type="match status" value="1"/>
</dbReference>
<dbReference type="InterPro" id="IPR011545">
    <property type="entry name" value="DEAD/DEAH_box_helicase_dom"/>
</dbReference>
<dbReference type="InterPro" id="IPR050079">
    <property type="entry name" value="DEAD_box_RNA_helicase"/>
</dbReference>
<dbReference type="InterPro" id="IPR014001">
    <property type="entry name" value="Helicase_ATP-bd"/>
</dbReference>
<dbReference type="InterPro" id="IPR001650">
    <property type="entry name" value="Helicase_C-like"/>
</dbReference>
<dbReference type="InterPro" id="IPR027417">
    <property type="entry name" value="P-loop_NTPase"/>
</dbReference>
<dbReference type="InterPro" id="IPR000629">
    <property type="entry name" value="RNA-helicase_DEAD-box_CS"/>
</dbReference>
<dbReference type="InterPro" id="IPR023554">
    <property type="entry name" value="RNA_helicase_ATP-dep_RhlB"/>
</dbReference>
<dbReference type="InterPro" id="IPR014014">
    <property type="entry name" value="RNA_helicase_DEAD_Q_motif"/>
</dbReference>
<dbReference type="NCBIfam" id="NF003419">
    <property type="entry name" value="PRK04837.1"/>
    <property type="match status" value="1"/>
</dbReference>
<dbReference type="PANTHER" id="PTHR47959:SF10">
    <property type="entry name" value="ATP-DEPENDENT RNA HELICASE RHLB"/>
    <property type="match status" value="1"/>
</dbReference>
<dbReference type="PANTHER" id="PTHR47959">
    <property type="entry name" value="ATP-DEPENDENT RNA HELICASE RHLE-RELATED"/>
    <property type="match status" value="1"/>
</dbReference>
<dbReference type="Pfam" id="PF00270">
    <property type="entry name" value="DEAD"/>
    <property type="match status" value="1"/>
</dbReference>
<dbReference type="Pfam" id="PF00271">
    <property type="entry name" value="Helicase_C"/>
    <property type="match status" value="1"/>
</dbReference>
<dbReference type="SMART" id="SM00487">
    <property type="entry name" value="DEXDc"/>
    <property type="match status" value="1"/>
</dbReference>
<dbReference type="SMART" id="SM00490">
    <property type="entry name" value="HELICc"/>
    <property type="match status" value="1"/>
</dbReference>
<dbReference type="SUPFAM" id="SSF52540">
    <property type="entry name" value="P-loop containing nucleoside triphosphate hydrolases"/>
    <property type="match status" value="1"/>
</dbReference>
<dbReference type="PROSITE" id="PS00039">
    <property type="entry name" value="DEAD_ATP_HELICASE"/>
    <property type="match status" value="1"/>
</dbReference>
<dbReference type="PROSITE" id="PS51192">
    <property type="entry name" value="HELICASE_ATP_BIND_1"/>
    <property type="match status" value="1"/>
</dbReference>
<dbReference type="PROSITE" id="PS51194">
    <property type="entry name" value="HELICASE_CTER"/>
    <property type="match status" value="1"/>
</dbReference>
<dbReference type="PROSITE" id="PS51195">
    <property type="entry name" value="Q_MOTIF"/>
    <property type="match status" value="1"/>
</dbReference>
<accession>Q7MGP7</accession>
<evidence type="ECO:0000255" key="1">
    <source>
        <dbReference type="HAMAP-Rule" id="MF_00661"/>
    </source>
</evidence>
<evidence type="ECO:0000256" key="2">
    <source>
        <dbReference type="SAM" id="MobiDB-lite"/>
    </source>
</evidence>
<organism>
    <name type="scientific">Vibrio vulnificus (strain YJ016)</name>
    <dbReference type="NCBI Taxonomy" id="196600"/>
    <lineage>
        <taxon>Bacteria</taxon>
        <taxon>Pseudomonadati</taxon>
        <taxon>Pseudomonadota</taxon>
        <taxon>Gammaproteobacteria</taxon>
        <taxon>Vibrionales</taxon>
        <taxon>Vibrionaceae</taxon>
        <taxon>Vibrio</taxon>
    </lineage>
</organism>
<keyword id="KW-0067">ATP-binding</keyword>
<keyword id="KW-0963">Cytoplasm</keyword>
<keyword id="KW-0347">Helicase</keyword>
<keyword id="KW-0378">Hydrolase</keyword>
<keyword id="KW-0547">Nucleotide-binding</keyword>
<keyword id="KW-0694">RNA-binding</keyword>
<feature type="chain" id="PRO_0000200789" description="ATP-dependent RNA helicase RhlB">
    <location>
        <begin position="1"/>
        <end position="435"/>
    </location>
</feature>
<feature type="domain" description="Helicase ATP-binding" evidence="1">
    <location>
        <begin position="40"/>
        <end position="219"/>
    </location>
</feature>
<feature type="domain" description="Helicase C-terminal" evidence="1">
    <location>
        <begin position="245"/>
        <end position="390"/>
    </location>
</feature>
<feature type="region of interest" description="Disordered" evidence="2">
    <location>
        <begin position="395"/>
        <end position="435"/>
    </location>
</feature>
<feature type="short sequence motif" description="Q motif">
    <location>
        <begin position="9"/>
        <end position="37"/>
    </location>
</feature>
<feature type="short sequence motif" description="DEAD box">
    <location>
        <begin position="165"/>
        <end position="168"/>
    </location>
</feature>
<feature type="compositionally biased region" description="Polar residues" evidence="2">
    <location>
        <begin position="401"/>
        <end position="413"/>
    </location>
</feature>
<feature type="compositionally biased region" description="Basic residues" evidence="2">
    <location>
        <begin position="422"/>
        <end position="435"/>
    </location>
</feature>
<feature type="binding site" evidence="1">
    <location>
        <begin position="53"/>
        <end position="60"/>
    </location>
    <ligand>
        <name>ATP</name>
        <dbReference type="ChEBI" id="CHEBI:30616"/>
    </ligand>
</feature>